<organism evidence="7">
    <name type="scientific">Sus scrofa</name>
    <name type="common">Pig</name>
    <dbReference type="NCBI Taxonomy" id="9823"/>
    <lineage>
        <taxon>Eukaryota</taxon>
        <taxon>Metazoa</taxon>
        <taxon>Chordata</taxon>
        <taxon>Craniata</taxon>
        <taxon>Vertebrata</taxon>
        <taxon>Euteleostomi</taxon>
        <taxon>Mammalia</taxon>
        <taxon>Eutheria</taxon>
        <taxon>Laurasiatheria</taxon>
        <taxon>Artiodactyla</taxon>
        <taxon>Suina</taxon>
        <taxon>Suidae</taxon>
        <taxon>Sus</taxon>
    </lineage>
</organism>
<protein>
    <recommendedName>
        <fullName evidence="1">Myosin regulatory light chain 2, atrial isoform</fullName>
        <shortName evidence="1">MLC-2a</shortName>
        <shortName evidence="1">MLC2a</shortName>
        <shortName evidence="1">Myosin light chain 2a</shortName>
    </recommendedName>
    <alternativeName>
        <fullName evidence="1">Myosin regulatory light chain 7</fullName>
    </alternativeName>
</protein>
<dbReference type="EMBL" id="CU928907">
    <property type="status" value="NOT_ANNOTATED_CDS"/>
    <property type="molecule type" value="Genomic_DNA"/>
</dbReference>
<dbReference type="RefSeq" id="XP_003134933.1">
    <property type="nucleotide sequence ID" value="XM_003134885.4"/>
</dbReference>
<dbReference type="SMR" id="F1SSF9"/>
<dbReference type="FunCoup" id="F1SSF9">
    <property type="interactions" value="127"/>
</dbReference>
<dbReference type="PaxDb" id="9823-ENSSSCP00000017742"/>
<dbReference type="PeptideAtlas" id="F1SSF9"/>
<dbReference type="Ensembl" id="ENSSSCT00000018234.5">
    <property type="protein sequence ID" value="ENSSSCP00000017742.3"/>
    <property type="gene ID" value="ENSSSCG00000016751.5"/>
</dbReference>
<dbReference type="Ensembl" id="ENSSSCT00025046763.1">
    <property type="protein sequence ID" value="ENSSSCP00025020043.1"/>
    <property type="gene ID" value="ENSSSCG00025034032.1"/>
</dbReference>
<dbReference type="Ensembl" id="ENSSSCT00030049951.1">
    <property type="protein sequence ID" value="ENSSSCP00030022709.1"/>
    <property type="gene ID" value="ENSSSCG00030035900.1"/>
</dbReference>
<dbReference type="Ensembl" id="ENSSSCT00035045850.1">
    <property type="protein sequence ID" value="ENSSSCP00035018314.1"/>
    <property type="gene ID" value="ENSSSCG00035034564.1"/>
</dbReference>
<dbReference type="Ensembl" id="ENSSSCT00040083973.1">
    <property type="protein sequence ID" value="ENSSSCP00040036589.1"/>
    <property type="gene ID" value="ENSSSCG00040061660.1"/>
</dbReference>
<dbReference type="Ensembl" id="ENSSSCT00045061544.1">
    <property type="protein sequence ID" value="ENSSSCP00045043244.1"/>
    <property type="gene ID" value="ENSSSCG00045035371.1"/>
</dbReference>
<dbReference type="Ensembl" id="ENSSSCT00050046386.1">
    <property type="protein sequence ID" value="ENSSSCP00050019181.1"/>
    <property type="gene ID" value="ENSSSCG00050034485.1"/>
</dbReference>
<dbReference type="Ensembl" id="ENSSSCT00055009958.1">
    <property type="protein sequence ID" value="ENSSSCP00055007885.1"/>
    <property type="gene ID" value="ENSSSCG00055004963.1"/>
</dbReference>
<dbReference type="Ensembl" id="ENSSSCT00060023508.1">
    <property type="protein sequence ID" value="ENSSSCP00060009828.1"/>
    <property type="gene ID" value="ENSSSCG00060017514.1"/>
</dbReference>
<dbReference type="Ensembl" id="ENSSSCT00065082397.1">
    <property type="protein sequence ID" value="ENSSSCP00065035899.1"/>
    <property type="gene ID" value="ENSSSCG00065060071.1"/>
</dbReference>
<dbReference type="Ensembl" id="ENSSSCT00065082499.1">
    <property type="protein sequence ID" value="ENSSSCP00065035947.1"/>
    <property type="gene ID" value="ENSSSCG00065060222.1"/>
</dbReference>
<dbReference type="Ensembl" id="ENSSSCT00085002718">
    <property type="protein sequence ID" value="ENSSSCP00085001934"/>
    <property type="gene ID" value="ENSSSCG00085001757"/>
</dbReference>
<dbReference type="Ensembl" id="ENSSSCT00090002763">
    <property type="protein sequence ID" value="ENSSSCP00090001603"/>
    <property type="gene ID" value="ENSSSCG00090001722"/>
</dbReference>
<dbReference type="Ensembl" id="ENSSSCT00105077257">
    <property type="protein sequence ID" value="ENSSSCP00105054664"/>
    <property type="gene ID" value="ENSSSCG00105040529"/>
</dbReference>
<dbReference type="Ensembl" id="ENSSSCT00110073133">
    <property type="protein sequence ID" value="ENSSSCP00110051756"/>
    <property type="gene ID" value="ENSSSCG00110038308"/>
</dbReference>
<dbReference type="Ensembl" id="ENSSSCT00115029574">
    <property type="protein sequence ID" value="ENSSSCP00115028078"/>
    <property type="gene ID" value="ENSSSCG00115016845"/>
</dbReference>
<dbReference type="Ensembl" id="ENSSSCT00130007404">
    <property type="protein sequence ID" value="ENSSSCP00130004913"/>
    <property type="gene ID" value="ENSSSCG00130004015"/>
</dbReference>
<dbReference type="GeneID" id="100514437"/>
<dbReference type="KEGG" id="ssc:100514437"/>
<dbReference type="CTD" id="58498"/>
<dbReference type="eggNOG" id="KOG0031">
    <property type="taxonomic scope" value="Eukaryota"/>
</dbReference>
<dbReference type="GeneTree" id="ENSGT00950000182787"/>
<dbReference type="HOGENOM" id="CLU_061288_9_3_1"/>
<dbReference type="InParanoid" id="F1SSF9"/>
<dbReference type="OMA" id="ALTHWGQ"/>
<dbReference type="OrthoDB" id="429467at2759"/>
<dbReference type="TreeFam" id="TF314218"/>
<dbReference type="Reactome" id="R-SSC-445355">
    <property type="pathway name" value="Smooth Muscle Contraction"/>
</dbReference>
<dbReference type="Proteomes" id="UP000008227">
    <property type="component" value="Chromosome 18"/>
</dbReference>
<dbReference type="Proteomes" id="UP000314985">
    <property type="component" value="Unplaced"/>
</dbReference>
<dbReference type="Proteomes" id="UP000694570">
    <property type="component" value="Unplaced"/>
</dbReference>
<dbReference type="Proteomes" id="UP000694571">
    <property type="component" value="Unplaced"/>
</dbReference>
<dbReference type="Proteomes" id="UP000694720">
    <property type="component" value="Unplaced"/>
</dbReference>
<dbReference type="Proteomes" id="UP000694722">
    <property type="component" value="Unplaced"/>
</dbReference>
<dbReference type="Proteomes" id="UP000694723">
    <property type="component" value="Unplaced"/>
</dbReference>
<dbReference type="Proteomes" id="UP000694724">
    <property type="component" value="Unplaced"/>
</dbReference>
<dbReference type="Proteomes" id="UP000694725">
    <property type="component" value="Unplaced"/>
</dbReference>
<dbReference type="Proteomes" id="UP000694726">
    <property type="component" value="Unplaced"/>
</dbReference>
<dbReference type="Proteomes" id="UP000694727">
    <property type="component" value="Unplaced"/>
</dbReference>
<dbReference type="Proteomes" id="UP000694728">
    <property type="component" value="Unplaced"/>
</dbReference>
<dbReference type="Bgee" id="ENSSSCG00000016751">
    <property type="expression patterns" value="Expressed in heart left ventricle and 38 other cell types or tissues"/>
</dbReference>
<dbReference type="ExpressionAtlas" id="F1SSF9">
    <property type="expression patterns" value="baseline and differential"/>
</dbReference>
<dbReference type="GO" id="GO:0005737">
    <property type="term" value="C:cytoplasm"/>
    <property type="evidence" value="ECO:0000318"/>
    <property type="project" value="GO_Central"/>
</dbReference>
<dbReference type="GO" id="GO:0030016">
    <property type="term" value="C:myofibril"/>
    <property type="evidence" value="ECO:0000318"/>
    <property type="project" value="GO_Central"/>
</dbReference>
<dbReference type="GO" id="GO:0016459">
    <property type="term" value="C:myosin complex"/>
    <property type="evidence" value="ECO:0007669"/>
    <property type="project" value="UniProtKB-KW"/>
</dbReference>
<dbReference type="GO" id="GO:0005509">
    <property type="term" value="F:calcium ion binding"/>
    <property type="evidence" value="ECO:0000318"/>
    <property type="project" value="GO_Central"/>
</dbReference>
<dbReference type="GO" id="GO:0048738">
    <property type="term" value="P:cardiac muscle tissue development"/>
    <property type="evidence" value="ECO:0000318"/>
    <property type="project" value="GO_Central"/>
</dbReference>
<dbReference type="GO" id="GO:0060047">
    <property type="term" value="P:heart contraction"/>
    <property type="evidence" value="ECO:0000318"/>
    <property type="project" value="GO_Central"/>
</dbReference>
<dbReference type="FunFam" id="1.10.238.10:FF:000010">
    <property type="entry name" value="Myosin regulatory light chain 2, atrial isoform"/>
    <property type="match status" value="1"/>
</dbReference>
<dbReference type="FunFam" id="1.10.238.10:FF:000007">
    <property type="entry name" value="Putative myosin regulatory light chain sqh"/>
    <property type="match status" value="1"/>
</dbReference>
<dbReference type="Gene3D" id="1.10.238.10">
    <property type="entry name" value="EF-hand"/>
    <property type="match status" value="2"/>
</dbReference>
<dbReference type="InterPro" id="IPR011992">
    <property type="entry name" value="EF-hand-dom_pair"/>
</dbReference>
<dbReference type="InterPro" id="IPR018247">
    <property type="entry name" value="EF_Hand_1_Ca_BS"/>
</dbReference>
<dbReference type="InterPro" id="IPR002048">
    <property type="entry name" value="EF_hand_dom"/>
</dbReference>
<dbReference type="InterPro" id="IPR050403">
    <property type="entry name" value="Myosin_RLC"/>
</dbReference>
<dbReference type="PANTHER" id="PTHR23049">
    <property type="entry name" value="MYOSIN REGULATORY LIGHT CHAIN 2"/>
    <property type="match status" value="1"/>
</dbReference>
<dbReference type="Pfam" id="PF13202">
    <property type="entry name" value="EF-hand_5"/>
    <property type="match status" value="1"/>
</dbReference>
<dbReference type="SMART" id="SM00054">
    <property type="entry name" value="EFh"/>
    <property type="match status" value="2"/>
</dbReference>
<dbReference type="SUPFAM" id="SSF47473">
    <property type="entry name" value="EF-hand"/>
    <property type="match status" value="1"/>
</dbReference>
<dbReference type="PROSITE" id="PS00018">
    <property type="entry name" value="EF_HAND_1"/>
    <property type="match status" value="1"/>
</dbReference>
<dbReference type="PROSITE" id="PS50222">
    <property type="entry name" value="EF_HAND_2"/>
    <property type="match status" value="3"/>
</dbReference>
<proteinExistence type="evidence at protein level"/>
<evidence type="ECO:0000250" key="1">
    <source>
        <dbReference type="UniProtKB" id="Q01449"/>
    </source>
</evidence>
<evidence type="ECO:0000250" key="2">
    <source>
        <dbReference type="UniProtKB" id="Q9QVP4"/>
    </source>
</evidence>
<evidence type="ECO:0000255" key="3">
    <source>
        <dbReference type="PROSITE-ProRule" id="PRU00448"/>
    </source>
</evidence>
<evidence type="ECO:0000269" key="4">
    <source ref="1"/>
</evidence>
<evidence type="ECO:0000269" key="5">
    <source ref="2"/>
</evidence>
<evidence type="ECO:0000305" key="6"/>
<evidence type="ECO:0000312" key="7">
    <source>
        <dbReference type="Proteomes" id="UP000008227"/>
    </source>
</evidence>
<reference evidence="7" key="1">
    <citation type="submission" date="2009-11" db="EMBL/GenBank/DDBJ databases">
        <authorList>
            <consortium name="Porcine genome sequencing project"/>
        </authorList>
    </citation>
    <scope>NUCLEOTIDE SEQUENCE [LARGE SCALE GENOMIC DNA]</scope>
    <source>
        <strain>Duroc</strain>
    </source>
</reference>
<reference evidence="6" key="2">
    <citation type="submission" date="2016-07" db="UniProtKB">
        <title>Distinct sequences and post-translational modifications in cardiac atrial and ventricular myosin light chains revealed by top-down mass spectrometry.</title>
        <authorList>
            <person name="Gregorich Z.R."/>
            <person name="Cai W."/>
            <person name="Chen A.J."/>
            <person name="Peng Y."/>
            <person name="Ge Y."/>
        </authorList>
    </citation>
    <scope>PROTEIN SEQUENCE OF 2-175</scope>
    <scope>ACETYLATION AT ALA-2</scope>
    <scope>PHOSPHORYLATION AT SER-23</scope>
    <scope>MASS SPECTROMETRY</scope>
    <scope>IDENTIFICATION BY MASS SPECTROMETRY</scope>
</reference>
<keyword id="KW-0007">Acetylation</keyword>
<keyword id="KW-0106">Calcium</keyword>
<keyword id="KW-0903">Direct protein sequencing</keyword>
<keyword id="KW-0479">Metal-binding</keyword>
<keyword id="KW-0505">Motor protein</keyword>
<keyword id="KW-0514">Muscle protein</keyword>
<keyword id="KW-0518">Myosin</keyword>
<keyword id="KW-0597">Phosphoprotein</keyword>
<keyword id="KW-1185">Reference proteome</keyword>
<keyword id="KW-0677">Repeat</keyword>
<feature type="initiator methionine" description="Removed" evidence="5">
    <location>
        <position position="1"/>
    </location>
</feature>
<feature type="chain" id="PRO_0000437966" description="Myosin regulatory light chain 2, atrial isoform">
    <location>
        <begin position="2"/>
        <end position="175"/>
    </location>
</feature>
<feature type="domain" description="EF-hand 1" evidence="3">
    <location>
        <begin position="32"/>
        <end position="67"/>
    </location>
</feature>
<feature type="domain" description="EF-hand 2" evidence="3">
    <location>
        <begin position="102"/>
        <end position="137"/>
    </location>
</feature>
<feature type="domain" description="EF-hand 3" evidence="3">
    <location>
        <begin position="138"/>
        <end position="173"/>
    </location>
</feature>
<feature type="binding site" evidence="3">
    <location>
        <position position="45"/>
    </location>
    <ligand>
        <name>Ca(2+)</name>
        <dbReference type="ChEBI" id="CHEBI:29108"/>
    </ligand>
</feature>
<feature type="binding site" evidence="3">
    <location>
        <position position="47"/>
    </location>
    <ligand>
        <name>Ca(2+)</name>
        <dbReference type="ChEBI" id="CHEBI:29108"/>
    </ligand>
</feature>
<feature type="binding site" evidence="3">
    <location>
        <position position="49"/>
    </location>
    <ligand>
        <name>Ca(2+)</name>
        <dbReference type="ChEBI" id="CHEBI:29108"/>
    </ligand>
</feature>
<feature type="binding site" evidence="3">
    <location>
        <position position="56"/>
    </location>
    <ligand>
        <name>Ca(2+)</name>
        <dbReference type="ChEBI" id="CHEBI:29108"/>
    </ligand>
</feature>
<feature type="modified residue" description="N-acetylalanine" evidence="4">
    <location>
        <position position="2"/>
    </location>
</feature>
<feature type="modified residue" description="Phosphoserine" evidence="2">
    <location>
        <position position="22"/>
    </location>
</feature>
<feature type="modified residue" description="Phosphoserine" evidence="5">
    <location>
        <position position="23"/>
    </location>
</feature>
<name>MLRA_PIG</name>
<sequence>MASRKAGTRSKAAATKQAQRGSSNVFSMFEQAQIQEFKEAFSCIDQNRDGIICKSDLRETYSQLGKVNVPEEELDAMLQEGKGPINFTVFLTLFGEKLNGTDPEEAILSAFRLFDPSGKGVVNKDQFKQLLLTQADKFSPAEVEQMFALTPMDLAGNIDYKSLCYIITHGDEKEE</sequence>
<accession>F1SSF9</accession>
<gene>
    <name type="primary">MYL7</name>
    <name evidence="1" type="synonym">MYL2A</name>
    <name evidence="1" type="synonym">MYLC2A</name>
</gene>
<comment type="subunit">
    <text evidence="6">Myosin is a hexamer of 2 heavy chains and 4 light chains.</text>
</comment>
<comment type="miscellaneous">
    <text evidence="6">This chain binds calcium.</text>
</comment>